<organism>
    <name type="scientific">Escherichia coli (strain K12 / MC4100 / BW2952)</name>
    <dbReference type="NCBI Taxonomy" id="595496"/>
    <lineage>
        <taxon>Bacteria</taxon>
        <taxon>Pseudomonadati</taxon>
        <taxon>Pseudomonadota</taxon>
        <taxon>Gammaproteobacteria</taxon>
        <taxon>Enterobacterales</taxon>
        <taxon>Enterobacteriaceae</taxon>
        <taxon>Escherichia</taxon>
    </lineage>
</organism>
<name>AAS_ECOBW</name>
<keyword id="KW-0012">Acyltransferase</keyword>
<keyword id="KW-0067">ATP-binding</keyword>
<keyword id="KW-0997">Cell inner membrane</keyword>
<keyword id="KW-1003">Cell membrane</keyword>
<keyword id="KW-0436">Ligase</keyword>
<keyword id="KW-0472">Membrane</keyword>
<keyword id="KW-0511">Multifunctional enzyme</keyword>
<keyword id="KW-0547">Nucleotide-binding</keyword>
<keyword id="KW-0808">Transferase</keyword>
<keyword id="KW-0812">Transmembrane</keyword>
<keyword id="KW-1133">Transmembrane helix</keyword>
<gene>
    <name evidence="1" type="primary">aas</name>
    <name type="ordered locus">BWG_2572</name>
</gene>
<sequence length="719" mass="80700">MLFSFFRNLCRVLYRVRVTGDTQALKGERVLITPNHVSFIDGILLGLFLPVRPVFAVYTSISQQWYMRWLKSFIDFVPLDPTQPMAIKHLVRLVEQGRPVVIFPEGRITTTGSLMKIYDGAGFVAAKSGATVIPVRIEGAELTHFSRLKGLVKRRLFPQITLHILPPTQVAMPDAPRARDRRKIAGEMLHQIMMEARMAVRPRETLYESLLSAMYRFGAGKKCVEDVNFTPDSYRKLLTKTLFVGRILEKYSVEGERIGLMLPNAGISAAVIFGAIARRRMPAMMNYTAGVKGLTSAITAAEIKTIFTSRQFLDKGKLWHLPEQLTQVRWVYLEDLKADVTTADKVWIFAHLLMPRLAQVKQQPEEEALILFTSGSEGHPKGVVHSHKSILANVEQIKTIADFTTNDRFMSALPLFHSFGLTVGLFTPLLTGAEVFLYPSPLHYRIVPELVYDRSCTVLFGTSTFLGHYARFANPYDFYRLRYVVAGAEKLQESTKQLWQDKFGLRILEGYGVTECAPVVSINVPMAAKPGTVGRILPGMDARLLSVPGIEEGGRLQLKGPNIMNGYLRVEKPGVLEVPTAENVRGEMERGWYDTGDIVRFDEQGFVQIQGRAKRFAKIAGEMVSLEMVEQLALGVSPDKVHATAIKSDASKGEALVLFTTDNELTRDKLQQYAREHGVPELAVPRDIRYLKQMPLLGSGKPDFVTLKSWVDEAEQHDE</sequence>
<reference key="1">
    <citation type="journal article" date="2009" name="J. Bacteriol.">
        <title>Genomic sequencing reveals regulatory mutations and recombinational events in the widely used MC4100 lineage of Escherichia coli K-12.</title>
        <authorList>
            <person name="Ferenci T."/>
            <person name="Zhou Z."/>
            <person name="Betteridge T."/>
            <person name="Ren Y."/>
            <person name="Liu Y."/>
            <person name="Feng L."/>
            <person name="Reeves P.R."/>
            <person name="Wang L."/>
        </authorList>
    </citation>
    <scope>NUCLEOTIDE SEQUENCE [LARGE SCALE GENOMIC DNA]</scope>
    <source>
        <strain>K12 / MC4100 / BW2952</strain>
    </source>
</reference>
<feature type="chain" id="PRO_1000213722" description="Bifunctional protein Aas">
    <location>
        <begin position="1"/>
        <end position="719"/>
    </location>
</feature>
<feature type="transmembrane region" description="Helical" evidence="1">
    <location>
        <begin position="258"/>
        <end position="277"/>
    </location>
</feature>
<feature type="transmembrane region" description="Helical" evidence="1">
    <location>
        <begin position="409"/>
        <end position="433"/>
    </location>
</feature>
<feature type="region of interest" description="Acyltransferase">
    <location>
        <begin position="15"/>
        <end position="138"/>
    </location>
</feature>
<feature type="region of interest" description="AMP-binding">
    <location>
        <begin position="233"/>
        <end position="646"/>
    </location>
</feature>
<feature type="active site" evidence="1">
    <location>
        <position position="36"/>
    </location>
</feature>
<dbReference type="EC" id="2.3.1.40" evidence="1"/>
<dbReference type="EC" id="6.2.1.20" evidence="1"/>
<dbReference type="EMBL" id="CP001396">
    <property type="protein sequence ID" value="ACR63157.1"/>
    <property type="molecule type" value="Genomic_DNA"/>
</dbReference>
<dbReference type="RefSeq" id="WP_000899054.1">
    <property type="nucleotide sequence ID" value="NC_012759.1"/>
</dbReference>
<dbReference type="SMR" id="C4ZZY9"/>
<dbReference type="KEGG" id="ebw:BWG_2572"/>
<dbReference type="HOGENOM" id="CLU_000022_59_8_6"/>
<dbReference type="GO" id="GO:0005886">
    <property type="term" value="C:plasma membrane"/>
    <property type="evidence" value="ECO:0007669"/>
    <property type="project" value="UniProtKB-SubCell"/>
</dbReference>
<dbReference type="GO" id="GO:0008779">
    <property type="term" value="F:acyl-[acyl-carrier-protein]-phospholipid O-acyltransferase activity"/>
    <property type="evidence" value="ECO:0007669"/>
    <property type="project" value="UniProtKB-UniRule"/>
</dbReference>
<dbReference type="GO" id="GO:0005524">
    <property type="term" value="F:ATP binding"/>
    <property type="evidence" value="ECO:0007669"/>
    <property type="project" value="UniProtKB-KW"/>
</dbReference>
<dbReference type="GO" id="GO:0008922">
    <property type="term" value="F:long-chain fatty acid [acyl-carrier-protein] ligase activity"/>
    <property type="evidence" value="ECO:0007669"/>
    <property type="project" value="UniProtKB-UniRule"/>
</dbReference>
<dbReference type="GO" id="GO:0031956">
    <property type="term" value="F:medium-chain fatty acid-CoA ligase activity"/>
    <property type="evidence" value="ECO:0007669"/>
    <property type="project" value="TreeGrafter"/>
</dbReference>
<dbReference type="GO" id="GO:0006631">
    <property type="term" value="P:fatty acid metabolic process"/>
    <property type="evidence" value="ECO:0007669"/>
    <property type="project" value="InterPro"/>
</dbReference>
<dbReference type="GO" id="GO:0008654">
    <property type="term" value="P:phospholipid biosynthetic process"/>
    <property type="evidence" value="ECO:0007669"/>
    <property type="project" value="InterPro"/>
</dbReference>
<dbReference type="CDD" id="cd05909">
    <property type="entry name" value="AAS_C"/>
    <property type="match status" value="1"/>
</dbReference>
<dbReference type="CDD" id="cd07989">
    <property type="entry name" value="LPLAT_AGPAT-like"/>
    <property type="match status" value="1"/>
</dbReference>
<dbReference type="FunFam" id="3.30.300.30:FF:000009">
    <property type="entry name" value="Bifunctional protein Aas"/>
    <property type="match status" value="1"/>
</dbReference>
<dbReference type="FunFam" id="3.40.50.12780:FF:000009">
    <property type="entry name" value="Bifunctional protein Aas"/>
    <property type="match status" value="1"/>
</dbReference>
<dbReference type="Gene3D" id="3.30.300.30">
    <property type="match status" value="1"/>
</dbReference>
<dbReference type="Gene3D" id="3.40.50.12780">
    <property type="entry name" value="N-terminal domain of ligase-like"/>
    <property type="match status" value="1"/>
</dbReference>
<dbReference type="HAMAP" id="MF_01162">
    <property type="entry name" value="Aas"/>
    <property type="match status" value="1"/>
</dbReference>
<dbReference type="InterPro" id="IPR023775">
    <property type="entry name" value="Aas"/>
</dbReference>
<dbReference type="InterPro" id="IPR045851">
    <property type="entry name" value="AMP-bd_C_sf"/>
</dbReference>
<dbReference type="InterPro" id="IPR020845">
    <property type="entry name" value="AMP-binding_CS"/>
</dbReference>
<dbReference type="InterPro" id="IPR000873">
    <property type="entry name" value="AMP-dep_synth/lig_dom"/>
</dbReference>
<dbReference type="InterPro" id="IPR042099">
    <property type="entry name" value="ANL_N_sf"/>
</dbReference>
<dbReference type="InterPro" id="IPR002123">
    <property type="entry name" value="Plipid/glycerol_acylTrfase"/>
</dbReference>
<dbReference type="NCBIfam" id="NF005959">
    <property type="entry name" value="PRK08043.1"/>
    <property type="match status" value="1"/>
</dbReference>
<dbReference type="PANTHER" id="PTHR43201">
    <property type="entry name" value="ACYL-COA SYNTHETASE"/>
    <property type="match status" value="1"/>
</dbReference>
<dbReference type="PANTHER" id="PTHR43201:SF8">
    <property type="entry name" value="ACYL-COA SYNTHETASE FAMILY MEMBER 3"/>
    <property type="match status" value="1"/>
</dbReference>
<dbReference type="Pfam" id="PF01553">
    <property type="entry name" value="Acyltransferase"/>
    <property type="match status" value="1"/>
</dbReference>
<dbReference type="Pfam" id="PF00501">
    <property type="entry name" value="AMP-binding"/>
    <property type="match status" value="1"/>
</dbReference>
<dbReference type="SMART" id="SM00563">
    <property type="entry name" value="PlsC"/>
    <property type="match status" value="1"/>
</dbReference>
<dbReference type="SUPFAM" id="SSF56801">
    <property type="entry name" value="Acetyl-CoA synthetase-like"/>
    <property type="match status" value="1"/>
</dbReference>
<dbReference type="SUPFAM" id="SSF69593">
    <property type="entry name" value="Glycerol-3-phosphate (1)-acyltransferase"/>
    <property type="match status" value="1"/>
</dbReference>
<dbReference type="PROSITE" id="PS00455">
    <property type="entry name" value="AMP_BINDING"/>
    <property type="match status" value="1"/>
</dbReference>
<comment type="function">
    <text evidence="1">Plays a role in lysophospholipid acylation. Transfers fatty acids to the 1-position via an enzyme-bound acyl-ACP intermediate in the presence of ATP and magnesium. Its physiological function is to regenerate phosphatidylethanolamine from 2-acyl-glycero-3-phosphoethanolamine (2-acyl-GPE) formed by transacylation reactions or degradation by phospholipase A1.</text>
</comment>
<comment type="catalytic activity">
    <reaction evidence="1">
        <text>a 2-acyl-sn-glycero-3-phosphoethanolamine + a fatty acyl-[ACP] = a 1,2-diacyl-sn-glycero-3-phosphoethanolamine + holo-[ACP]</text>
        <dbReference type="Rhea" id="RHEA:10304"/>
        <dbReference type="Rhea" id="RHEA-COMP:9685"/>
        <dbReference type="Rhea" id="RHEA-COMP:14125"/>
        <dbReference type="ChEBI" id="CHEBI:64479"/>
        <dbReference type="ChEBI" id="CHEBI:64612"/>
        <dbReference type="ChEBI" id="CHEBI:65213"/>
        <dbReference type="ChEBI" id="CHEBI:138651"/>
        <dbReference type="EC" id="2.3.1.40"/>
    </reaction>
</comment>
<comment type="catalytic activity">
    <reaction evidence="1">
        <text>a long-chain fatty acid + holo-[ACP] + ATP = a long-chain fatty acyl-[ACP] + AMP + diphosphate</text>
        <dbReference type="Rhea" id="RHEA:45588"/>
        <dbReference type="Rhea" id="RHEA-COMP:9685"/>
        <dbReference type="Rhea" id="RHEA-COMP:12682"/>
        <dbReference type="ChEBI" id="CHEBI:30616"/>
        <dbReference type="ChEBI" id="CHEBI:33019"/>
        <dbReference type="ChEBI" id="CHEBI:57560"/>
        <dbReference type="ChEBI" id="CHEBI:64479"/>
        <dbReference type="ChEBI" id="CHEBI:133243"/>
        <dbReference type="ChEBI" id="CHEBI:456215"/>
        <dbReference type="EC" id="6.2.1.20"/>
    </reaction>
</comment>
<comment type="subcellular location">
    <subcellularLocation>
        <location evidence="1">Cell inner membrane</location>
        <topology evidence="1">Multi-pass membrane protein</topology>
    </subcellularLocation>
</comment>
<comment type="similarity">
    <text evidence="1">In the N-terminal section; belongs to the 2-acyl-GPE acetyltransferase family.</text>
</comment>
<comment type="similarity">
    <text evidence="1">In the C-terminal section; belongs to the ATP-dependent AMP-binding enzyme family.</text>
</comment>
<accession>C4ZZY9</accession>
<evidence type="ECO:0000255" key="1">
    <source>
        <dbReference type="HAMAP-Rule" id="MF_01162"/>
    </source>
</evidence>
<protein>
    <recommendedName>
        <fullName evidence="1">Bifunctional protein Aas</fullName>
    </recommendedName>
    <domain>
        <recommendedName>
            <fullName evidence="1">2-acylglycerophosphoethanolamine acyltransferase</fullName>
            <ecNumber evidence="1">2.3.1.40</ecNumber>
        </recommendedName>
        <alternativeName>
            <fullName evidence="1">2-acyl-GPE acyltransferase</fullName>
        </alternativeName>
        <alternativeName>
            <fullName evidence="1">Acyl-[acyl-carrier-protein]--phospholipid O-acyltransferase</fullName>
        </alternativeName>
    </domain>
    <domain>
        <recommendedName>
            <fullName evidence="1">Acyl-[acyl-carrier-protein] synthetase</fullName>
            <ecNumber evidence="1">6.2.1.20</ecNumber>
        </recommendedName>
        <alternativeName>
            <fullName evidence="1">Acyl-ACP synthetase</fullName>
        </alternativeName>
        <alternativeName>
            <fullName evidence="1">Long-chain-fatty-acid--[acyl-carrier-protein] ligase</fullName>
        </alternativeName>
    </domain>
</protein>
<proteinExistence type="inferred from homology"/>